<reference key="1">
    <citation type="submission" date="2007-07" db="EMBL/GenBank/DDBJ databases">
        <title>Genome sequence of Campylobacter curvus 525.92 isolated from human feces.</title>
        <authorList>
            <person name="Fouts D.E."/>
            <person name="Mongodin E.F."/>
            <person name="Puiu D."/>
            <person name="Sebastian Y."/>
            <person name="Miller W.G."/>
            <person name="Mandrell R.E."/>
            <person name="Lastovica A.J."/>
            <person name="Nelson K.E."/>
        </authorList>
    </citation>
    <scope>NUCLEOTIDE SEQUENCE [LARGE SCALE GENOMIC DNA]</scope>
    <source>
        <strain>525.92</strain>
    </source>
</reference>
<comment type="function">
    <text evidence="1">Catalyzes the 2-thiolation of uridine at the wobble position (U34) of tRNA, leading to the formation of s(2)U34.</text>
</comment>
<comment type="catalytic activity">
    <reaction evidence="1">
        <text>S-sulfanyl-L-cysteinyl-[protein] + uridine(34) in tRNA + AH2 + ATP = 2-thiouridine(34) in tRNA + L-cysteinyl-[protein] + A + AMP + diphosphate + H(+)</text>
        <dbReference type="Rhea" id="RHEA:47032"/>
        <dbReference type="Rhea" id="RHEA-COMP:10131"/>
        <dbReference type="Rhea" id="RHEA-COMP:11726"/>
        <dbReference type="Rhea" id="RHEA-COMP:11727"/>
        <dbReference type="Rhea" id="RHEA-COMP:11728"/>
        <dbReference type="ChEBI" id="CHEBI:13193"/>
        <dbReference type="ChEBI" id="CHEBI:15378"/>
        <dbReference type="ChEBI" id="CHEBI:17499"/>
        <dbReference type="ChEBI" id="CHEBI:29950"/>
        <dbReference type="ChEBI" id="CHEBI:30616"/>
        <dbReference type="ChEBI" id="CHEBI:33019"/>
        <dbReference type="ChEBI" id="CHEBI:61963"/>
        <dbReference type="ChEBI" id="CHEBI:65315"/>
        <dbReference type="ChEBI" id="CHEBI:87170"/>
        <dbReference type="ChEBI" id="CHEBI:456215"/>
        <dbReference type="EC" id="2.8.1.13"/>
    </reaction>
</comment>
<comment type="subcellular location">
    <subcellularLocation>
        <location evidence="1">Cytoplasm</location>
    </subcellularLocation>
</comment>
<comment type="similarity">
    <text evidence="1">Belongs to the MnmA/TRMU family.</text>
</comment>
<feature type="chain" id="PRO_0000349569" description="tRNA-specific 2-thiouridylase MnmA">
    <location>
        <begin position="1"/>
        <end position="339"/>
    </location>
</feature>
<feature type="region of interest" description="Interaction with tRNA" evidence="1">
    <location>
        <begin position="134"/>
        <end position="136"/>
    </location>
</feature>
<feature type="region of interest" description="Interaction with tRNA" evidence="1">
    <location>
        <begin position="288"/>
        <end position="289"/>
    </location>
</feature>
<feature type="active site" description="Nucleophile" evidence="1">
    <location>
        <position position="92"/>
    </location>
</feature>
<feature type="active site" description="Cysteine persulfide intermediate" evidence="1">
    <location>
        <position position="186"/>
    </location>
</feature>
<feature type="binding site" evidence="1">
    <location>
        <begin position="6"/>
        <end position="13"/>
    </location>
    <ligand>
        <name>ATP</name>
        <dbReference type="ChEBI" id="CHEBI:30616"/>
    </ligand>
</feature>
<feature type="binding site" evidence="1">
    <location>
        <position position="32"/>
    </location>
    <ligand>
        <name>ATP</name>
        <dbReference type="ChEBI" id="CHEBI:30616"/>
    </ligand>
</feature>
<feature type="binding site" evidence="1">
    <location>
        <position position="116"/>
    </location>
    <ligand>
        <name>ATP</name>
        <dbReference type="ChEBI" id="CHEBI:30616"/>
    </ligand>
</feature>
<feature type="site" description="Interaction with tRNA" evidence="1">
    <location>
        <position position="117"/>
    </location>
</feature>
<feature type="site" description="Interaction with tRNA" evidence="1">
    <location>
        <position position="322"/>
    </location>
</feature>
<feature type="disulfide bond" description="Alternate" evidence="1">
    <location>
        <begin position="92"/>
        <end position="186"/>
    </location>
</feature>
<organism>
    <name type="scientific">Campylobacter curvus (strain 525.92)</name>
    <dbReference type="NCBI Taxonomy" id="360105"/>
    <lineage>
        <taxon>Bacteria</taxon>
        <taxon>Pseudomonadati</taxon>
        <taxon>Campylobacterota</taxon>
        <taxon>Epsilonproteobacteria</taxon>
        <taxon>Campylobacterales</taxon>
        <taxon>Campylobacteraceae</taxon>
        <taxon>Campylobacter</taxon>
    </lineage>
</organism>
<dbReference type="EC" id="2.8.1.13" evidence="1"/>
<dbReference type="EMBL" id="CP000767">
    <property type="protein sequence ID" value="EAT99969.1"/>
    <property type="molecule type" value="Genomic_DNA"/>
</dbReference>
<dbReference type="RefSeq" id="WP_011992616.1">
    <property type="nucleotide sequence ID" value="NC_009715.2"/>
</dbReference>
<dbReference type="SMR" id="A7GZX4"/>
<dbReference type="STRING" id="360105.CCV52592_1442"/>
<dbReference type="KEGG" id="ccv:CCV52592_1442"/>
<dbReference type="HOGENOM" id="CLU_035188_0_0_7"/>
<dbReference type="OrthoDB" id="9800696at2"/>
<dbReference type="Proteomes" id="UP000006380">
    <property type="component" value="Chromosome"/>
</dbReference>
<dbReference type="GO" id="GO:0005737">
    <property type="term" value="C:cytoplasm"/>
    <property type="evidence" value="ECO:0007669"/>
    <property type="project" value="UniProtKB-SubCell"/>
</dbReference>
<dbReference type="GO" id="GO:0005524">
    <property type="term" value="F:ATP binding"/>
    <property type="evidence" value="ECO:0007669"/>
    <property type="project" value="UniProtKB-KW"/>
</dbReference>
<dbReference type="GO" id="GO:0000049">
    <property type="term" value="F:tRNA binding"/>
    <property type="evidence" value="ECO:0007669"/>
    <property type="project" value="UniProtKB-KW"/>
</dbReference>
<dbReference type="GO" id="GO:0103016">
    <property type="term" value="F:tRNA-uridine 2-sulfurtransferase activity"/>
    <property type="evidence" value="ECO:0007669"/>
    <property type="project" value="UniProtKB-EC"/>
</dbReference>
<dbReference type="GO" id="GO:0002143">
    <property type="term" value="P:tRNA wobble position uridine thiolation"/>
    <property type="evidence" value="ECO:0007669"/>
    <property type="project" value="TreeGrafter"/>
</dbReference>
<dbReference type="CDD" id="cd01998">
    <property type="entry name" value="MnmA_TRMU-like"/>
    <property type="match status" value="1"/>
</dbReference>
<dbReference type="FunFam" id="2.30.30.280:FF:000001">
    <property type="entry name" value="tRNA-specific 2-thiouridylase MnmA"/>
    <property type="match status" value="1"/>
</dbReference>
<dbReference type="Gene3D" id="2.30.30.280">
    <property type="entry name" value="Adenine nucleotide alpha hydrolases-like domains"/>
    <property type="match status" value="1"/>
</dbReference>
<dbReference type="Gene3D" id="3.40.50.620">
    <property type="entry name" value="HUPs"/>
    <property type="match status" value="1"/>
</dbReference>
<dbReference type="Gene3D" id="2.40.30.10">
    <property type="entry name" value="Translation factors"/>
    <property type="match status" value="1"/>
</dbReference>
<dbReference type="HAMAP" id="MF_00144">
    <property type="entry name" value="tRNA_thiouridyl_MnmA"/>
    <property type="match status" value="1"/>
</dbReference>
<dbReference type="InterPro" id="IPR004506">
    <property type="entry name" value="MnmA-like"/>
</dbReference>
<dbReference type="InterPro" id="IPR046885">
    <property type="entry name" value="MnmA-like_C"/>
</dbReference>
<dbReference type="InterPro" id="IPR046884">
    <property type="entry name" value="MnmA-like_central"/>
</dbReference>
<dbReference type="InterPro" id="IPR023382">
    <property type="entry name" value="MnmA-like_central_sf"/>
</dbReference>
<dbReference type="InterPro" id="IPR014729">
    <property type="entry name" value="Rossmann-like_a/b/a_fold"/>
</dbReference>
<dbReference type="NCBIfam" id="NF001138">
    <property type="entry name" value="PRK00143.1"/>
    <property type="match status" value="1"/>
</dbReference>
<dbReference type="NCBIfam" id="TIGR00420">
    <property type="entry name" value="trmU"/>
    <property type="match status" value="1"/>
</dbReference>
<dbReference type="PANTHER" id="PTHR11933:SF5">
    <property type="entry name" value="MITOCHONDRIAL TRNA-SPECIFIC 2-THIOURIDYLASE 1"/>
    <property type="match status" value="1"/>
</dbReference>
<dbReference type="PANTHER" id="PTHR11933">
    <property type="entry name" value="TRNA 5-METHYLAMINOMETHYL-2-THIOURIDYLATE -METHYLTRANSFERASE"/>
    <property type="match status" value="1"/>
</dbReference>
<dbReference type="Pfam" id="PF03054">
    <property type="entry name" value="tRNA_Me_trans"/>
    <property type="match status" value="1"/>
</dbReference>
<dbReference type="Pfam" id="PF20258">
    <property type="entry name" value="tRNA_Me_trans_C"/>
    <property type="match status" value="1"/>
</dbReference>
<dbReference type="Pfam" id="PF20259">
    <property type="entry name" value="tRNA_Me_trans_M"/>
    <property type="match status" value="1"/>
</dbReference>
<dbReference type="SUPFAM" id="SSF52402">
    <property type="entry name" value="Adenine nucleotide alpha hydrolases-like"/>
    <property type="match status" value="1"/>
</dbReference>
<gene>
    <name evidence="1" type="primary">mnmA</name>
    <name type="ordered locus">Ccur92_14620</name>
    <name type="ORF">CCV52592_1442</name>
</gene>
<protein>
    <recommendedName>
        <fullName evidence="1">tRNA-specific 2-thiouridylase MnmA</fullName>
        <ecNumber evidence="1">2.8.1.13</ecNumber>
    </recommendedName>
</protein>
<sequence>MKIMVAMSGGVDSTMTAKILKEAGHEIEGCYMKLHQKPGYHEENIRKVKKVGEYLGIKVHILDLQDKFNEFVYDPFVRLYKEGKTPNPCALCNRFIKLGALLNFAKQNGCEKLATGHYVQIIDGFVTMAKDPSKDQSYFLAQVPKEVLKDVIFPLGDKFKADIKELAREVPVLNEFATQPESSEICFVEDTYIEILNKHYNTNLPGNVVDKNGNVIGRHQGYMHYTIGKRRGFEVFGAHEPHFVLKINADKNEIVVGSKDDLAQKIVELENVNLFIDEDEFECETKIRYRSPKLEASVKIDKQNKTAVVALSQNALGVAQGQLCVMYDGERVIASGFIK</sequence>
<accession>A7GZX4</accession>
<keyword id="KW-0067">ATP-binding</keyword>
<keyword id="KW-0963">Cytoplasm</keyword>
<keyword id="KW-1015">Disulfide bond</keyword>
<keyword id="KW-0547">Nucleotide-binding</keyword>
<keyword id="KW-1185">Reference proteome</keyword>
<keyword id="KW-0694">RNA-binding</keyword>
<keyword id="KW-0808">Transferase</keyword>
<keyword id="KW-0819">tRNA processing</keyword>
<keyword id="KW-0820">tRNA-binding</keyword>
<name>MNMA_CAMC5</name>
<evidence type="ECO:0000255" key="1">
    <source>
        <dbReference type="HAMAP-Rule" id="MF_00144"/>
    </source>
</evidence>
<proteinExistence type="inferred from homology"/>